<feature type="chain" id="PRO_0000223470" description="Translation initiation factor eIF2B subunit beta">
    <location>
        <begin position="1"/>
        <end position="351"/>
    </location>
</feature>
<gene>
    <name type="primary">EIF2B2</name>
</gene>
<sequence length="351" mass="38995">MPGAAAKGSELSERIESFVEALKRGGGRRSSEDMARETLGLLRRIITDHRWSNAGELMELIRREGRRMTAAQPSETTVGNMVRRVLRIIREEYGRLHGRSDESDQQESLHKLLTSGGLSEDFRSHYAQLQSNIIEAINELLVELEGTTENIAAQALEHIHSNEVIMTIGFSRTVEAFLREAARKRKFHVIVAECAPFCQGHEMAVNLSKAGIETTVMTDAAIFAVMSRVNKVIIGTKTILANGALRAVAGTHTLALAAKHHSTPLIVCAPMFKLSPQFPNEEDSFHKFVAPEEVLPFTEGDILEKVSVHCPVFDYVPPELITLFISNIGGNAPSYIYRLMSELYHPDDHVL</sequence>
<comment type="function">
    <text evidence="1">Acts as a component of the translation initiation factor 2B (eIF2B) complex, which catalyzes the exchange of GDP for GTP on eukaryotic initiation factor 2 (eIF2) gamma subunit. Its guanine nucleotide exchange factor activity is repressed when bound to eIF2 complex phosphorylated on the alpha subunit, thereby limiting the amount of methionyl-initiator methionine tRNA available to the ribosome and consequently global translation is repressed.</text>
</comment>
<comment type="activity regulation">
    <text evidence="1">Activated by the chemical integrated stress response (ISR) inhibitor ISRIB which stimulates guanine nucleotide exchange factor activity for both phosphorylated and unphosphorylated eIF2.</text>
</comment>
<comment type="subunit">
    <text evidence="1">Component of the translation initiation factor 2B (eIF2B) complex which is a heterodecamer of two sets of five different subunits: alpha, beta, gamma, delta and epsilon. Subunits alpha, beta and delta comprise a regulatory subcomplex and subunits epsilon and gamma comprise a catalytic subcomplex. Within the complex, the hexameric regulatory complex resides at the center, with the two heterodimeric catalytic subcomplexes bound on opposite sides.</text>
</comment>
<comment type="subcellular location">
    <subcellularLocation>
        <location evidence="2">Cytoplasm</location>
        <location evidence="2">Cytosol</location>
    </subcellularLocation>
</comment>
<comment type="similarity">
    <text evidence="3">Belongs to the eIF-2B alpha/beta/delta subunits family.</text>
</comment>
<proteinExistence type="evidence at transcript level"/>
<keyword id="KW-0963">Cytoplasm</keyword>
<keyword id="KW-0396">Initiation factor</keyword>
<keyword id="KW-0648">Protein biosynthesis</keyword>
<keyword id="KW-1185">Reference proteome</keyword>
<evidence type="ECO:0000250" key="1">
    <source>
        <dbReference type="UniProtKB" id="P49770"/>
    </source>
</evidence>
<evidence type="ECO:0000250" key="2">
    <source>
        <dbReference type="UniProtKB" id="Q9UT76"/>
    </source>
</evidence>
<evidence type="ECO:0000305" key="3"/>
<accession>Q5E9B4</accession>
<accession>A4FV73</accession>
<reference key="1">
    <citation type="journal article" date="2005" name="BMC Genomics">
        <title>Characterization of 954 bovine full-CDS cDNA sequences.</title>
        <authorList>
            <person name="Harhay G.P."/>
            <person name="Sonstegard T.S."/>
            <person name="Keele J.W."/>
            <person name="Heaton M.P."/>
            <person name="Clawson M.L."/>
            <person name="Snelling W.M."/>
            <person name="Wiedmann R.T."/>
            <person name="Van Tassell C.P."/>
            <person name="Smith T.P.L."/>
        </authorList>
    </citation>
    <scope>NUCLEOTIDE SEQUENCE [LARGE SCALE MRNA]</scope>
</reference>
<reference key="2">
    <citation type="submission" date="2006-09" db="EMBL/GenBank/DDBJ databases">
        <authorList>
            <consortium name="NIH - Mammalian Gene Collection (MGC) project"/>
        </authorList>
    </citation>
    <scope>NUCLEOTIDE SEQUENCE [LARGE SCALE MRNA]</scope>
    <source>
        <strain>Hereford</strain>
        <tissue>Brain cortex</tissue>
    </source>
</reference>
<organism>
    <name type="scientific">Bos taurus</name>
    <name type="common">Bovine</name>
    <dbReference type="NCBI Taxonomy" id="9913"/>
    <lineage>
        <taxon>Eukaryota</taxon>
        <taxon>Metazoa</taxon>
        <taxon>Chordata</taxon>
        <taxon>Craniata</taxon>
        <taxon>Vertebrata</taxon>
        <taxon>Euteleostomi</taxon>
        <taxon>Mammalia</taxon>
        <taxon>Eutheria</taxon>
        <taxon>Laurasiatheria</taxon>
        <taxon>Artiodactyla</taxon>
        <taxon>Ruminantia</taxon>
        <taxon>Pecora</taxon>
        <taxon>Bovidae</taxon>
        <taxon>Bovinae</taxon>
        <taxon>Bos</taxon>
    </lineage>
</organism>
<name>EI2BB_BOVIN</name>
<dbReference type="EMBL" id="BT021006">
    <property type="protein sequence ID" value="AAX09023.1"/>
    <property type="molecule type" value="mRNA"/>
</dbReference>
<dbReference type="EMBL" id="BC123823">
    <property type="protein sequence ID" value="AAI23824.1"/>
    <property type="molecule type" value="mRNA"/>
</dbReference>
<dbReference type="RefSeq" id="NP_001015593.1">
    <property type="nucleotide sequence ID" value="NM_001015593.1"/>
</dbReference>
<dbReference type="SMR" id="Q5E9B4"/>
<dbReference type="FunCoup" id="Q5E9B4">
    <property type="interactions" value="3646"/>
</dbReference>
<dbReference type="STRING" id="9913.ENSBTAP00000011424"/>
<dbReference type="PaxDb" id="9913-ENSBTAP00000011424"/>
<dbReference type="GeneID" id="513958"/>
<dbReference type="KEGG" id="bta:513958"/>
<dbReference type="CTD" id="8892"/>
<dbReference type="VEuPathDB" id="HostDB:ENSBTAG00000008664"/>
<dbReference type="eggNOG" id="KOG1465">
    <property type="taxonomic scope" value="Eukaryota"/>
</dbReference>
<dbReference type="HOGENOM" id="CLU_016218_4_3_1"/>
<dbReference type="InParanoid" id="Q5E9B4"/>
<dbReference type="OMA" id="SHSCAVA"/>
<dbReference type="OrthoDB" id="269919at2759"/>
<dbReference type="TreeFam" id="TF101506"/>
<dbReference type="Reactome" id="R-BTA-72731">
    <property type="pathway name" value="Recycling of eIF2:GDP"/>
</dbReference>
<dbReference type="Proteomes" id="UP000009136">
    <property type="component" value="Chromosome 10"/>
</dbReference>
<dbReference type="Bgee" id="ENSBTAG00000008664">
    <property type="expression patterns" value="Expressed in prostate gland and 108 other cell types or tissues"/>
</dbReference>
<dbReference type="GO" id="GO:0005737">
    <property type="term" value="C:cytoplasm"/>
    <property type="evidence" value="ECO:0000250"/>
    <property type="project" value="UniProtKB"/>
</dbReference>
<dbReference type="GO" id="GO:0005829">
    <property type="term" value="C:cytosol"/>
    <property type="evidence" value="ECO:0007669"/>
    <property type="project" value="UniProtKB-SubCell"/>
</dbReference>
<dbReference type="GO" id="GO:0005851">
    <property type="term" value="C:eukaryotic translation initiation factor 2B complex"/>
    <property type="evidence" value="ECO:0000250"/>
    <property type="project" value="UniProtKB"/>
</dbReference>
<dbReference type="GO" id="GO:0005524">
    <property type="term" value="F:ATP binding"/>
    <property type="evidence" value="ECO:0000250"/>
    <property type="project" value="UniProtKB"/>
</dbReference>
<dbReference type="GO" id="GO:0005525">
    <property type="term" value="F:GTP binding"/>
    <property type="evidence" value="ECO:0000250"/>
    <property type="project" value="UniProtKB"/>
</dbReference>
<dbReference type="GO" id="GO:0005085">
    <property type="term" value="F:guanyl-nucleotide exchange factor activity"/>
    <property type="evidence" value="ECO:0000250"/>
    <property type="project" value="UniProtKB"/>
</dbReference>
<dbReference type="GO" id="GO:0003743">
    <property type="term" value="F:translation initiation factor activity"/>
    <property type="evidence" value="ECO:0000318"/>
    <property type="project" value="GO_Central"/>
</dbReference>
<dbReference type="GO" id="GO:0007417">
    <property type="term" value="P:central nervous system development"/>
    <property type="evidence" value="ECO:0000250"/>
    <property type="project" value="UniProtKB"/>
</dbReference>
<dbReference type="GO" id="GO:0002183">
    <property type="term" value="P:cytoplasmic translational initiation"/>
    <property type="evidence" value="ECO:0000250"/>
    <property type="project" value="UniProtKB"/>
</dbReference>
<dbReference type="GO" id="GO:0042552">
    <property type="term" value="P:myelination"/>
    <property type="evidence" value="ECO:0000250"/>
    <property type="project" value="UniProtKB"/>
</dbReference>
<dbReference type="GO" id="GO:0014003">
    <property type="term" value="P:oligodendrocyte development"/>
    <property type="evidence" value="ECO:0000250"/>
    <property type="project" value="UniProtKB"/>
</dbReference>
<dbReference type="GO" id="GO:0001541">
    <property type="term" value="P:ovarian follicle development"/>
    <property type="evidence" value="ECO:0000250"/>
    <property type="project" value="UniProtKB"/>
</dbReference>
<dbReference type="GO" id="GO:0050852">
    <property type="term" value="P:T cell receptor signaling pathway"/>
    <property type="evidence" value="ECO:0000250"/>
    <property type="project" value="UniProtKB"/>
</dbReference>
<dbReference type="GO" id="GO:0006413">
    <property type="term" value="P:translational initiation"/>
    <property type="evidence" value="ECO:0000250"/>
    <property type="project" value="UniProtKB"/>
</dbReference>
<dbReference type="FunFam" id="3.40.50.10470:FF:000004">
    <property type="entry name" value="Translation initiation factor eIF-2B subunit beta"/>
    <property type="match status" value="1"/>
</dbReference>
<dbReference type="Gene3D" id="3.40.50.10470">
    <property type="entry name" value="Translation initiation factor eif-2b, domain 2"/>
    <property type="match status" value="1"/>
</dbReference>
<dbReference type="InterPro" id="IPR051855">
    <property type="entry name" value="eIF2B_beta_subunit"/>
</dbReference>
<dbReference type="InterPro" id="IPR000649">
    <property type="entry name" value="IF-2B-related"/>
</dbReference>
<dbReference type="InterPro" id="IPR042529">
    <property type="entry name" value="IF_2B-like_C"/>
</dbReference>
<dbReference type="InterPro" id="IPR037171">
    <property type="entry name" value="NagB/RpiA_transferase-like"/>
</dbReference>
<dbReference type="PANTHER" id="PTHR45859">
    <property type="entry name" value="TRANSLATION INITIATION FACTOR EIF-2B SUBUNIT BETA"/>
    <property type="match status" value="1"/>
</dbReference>
<dbReference type="PANTHER" id="PTHR45859:SF1">
    <property type="entry name" value="TRANSLATION INITIATION FACTOR EIF-2B SUBUNIT BETA"/>
    <property type="match status" value="1"/>
</dbReference>
<dbReference type="Pfam" id="PF01008">
    <property type="entry name" value="IF-2B"/>
    <property type="match status" value="1"/>
</dbReference>
<dbReference type="SUPFAM" id="SSF100950">
    <property type="entry name" value="NagB/RpiA/CoA transferase-like"/>
    <property type="match status" value="1"/>
</dbReference>
<protein>
    <recommendedName>
        <fullName>Translation initiation factor eIF2B subunit beta</fullName>
    </recommendedName>
    <alternativeName>
        <fullName>eIF2B GDP-GTP exchange factor subunit beta</fullName>
    </alternativeName>
</protein>